<proteinExistence type="evidence at protein level"/>
<protein>
    <recommendedName>
        <fullName>Metaxin-2</fullName>
    </recommendedName>
    <alternativeName>
        <fullName>Mitochondrial outer membrane import complex protein 2</fullName>
    </alternativeName>
</protein>
<organism>
    <name type="scientific">Mus musculus</name>
    <name type="common">Mouse</name>
    <dbReference type="NCBI Taxonomy" id="10090"/>
    <lineage>
        <taxon>Eukaryota</taxon>
        <taxon>Metazoa</taxon>
        <taxon>Chordata</taxon>
        <taxon>Craniata</taxon>
        <taxon>Vertebrata</taxon>
        <taxon>Euteleostomi</taxon>
        <taxon>Mammalia</taxon>
        <taxon>Eutheria</taxon>
        <taxon>Euarchontoglires</taxon>
        <taxon>Glires</taxon>
        <taxon>Rodentia</taxon>
        <taxon>Myomorpha</taxon>
        <taxon>Muroidea</taxon>
        <taxon>Muridae</taxon>
        <taxon>Murinae</taxon>
        <taxon>Mus</taxon>
        <taxon>Mus</taxon>
    </lineage>
</organism>
<sequence length="263" mass="29758">MSLVAEAFVSQIAATEPWPENATLYQQLRGEQILLSDNAASLAVQAFLQMCNLPVKVVCRANAEYMSPSGKVPFIHVGNQVVSELGPIVQFVKAKGHSLSDGLDEVQKAEMKAYMELVNNMLLTAELYLQWCDEATVGEITIARYGSPYPWPLNHILAYQKQWEVKRKMKAIGWGNKTLDQVLEDVDQCCQALSQRLGTQPYFFNKQPTELDALVFGHLYTILTTQLTSDELSEKVKNYSNLLAFCRRIEQHYFEDWGKGRLS</sequence>
<feature type="initiator methionine" description="Removed" evidence="1">
    <location>
        <position position="1"/>
    </location>
</feature>
<feature type="chain" id="PRO_0000220996" description="Metaxin-2">
    <location>
        <begin position="2"/>
        <end position="263"/>
    </location>
</feature>
<feature type="modified residue" description="N-acetylserine" evidence="1">
    <location>
        <position position="2"/>
    </location>
</feature>
<comment type="function">
    <text evidence="2">Involved in transport of proteins into the mitochondrion.</text>
</comment>
<comment type="subunit">
    <text evidence="1 2">Interacts with MTX1/metaxin-1. Associates with the mitochondrial contact site and cristae organizing system (MICOS) complex, composed of at least MICOS10/MIC10, CHCHD3/MIC19, CHCHD6/MIC25, APOOL/MIC27, IMMT/MIC60, APOO/MIC23/MIC26 and QIL1/MIC13. This complex was also known under the names MINOS or MitOS complex. The MICOS complex associates with mitochondrial outer membrane proteins SAMM50, MTX1 and MTX2 (together described as components of the mitochondrial outer membrane sorting assembly machinery (SAM) complex) and DNAJC11, mitochondrial inner membrane protein TMEM11 and with HSPA9. The MICOS and SAM complexes together with DNAJC11 are part of a large protein complex spanning both membranes termed the mitochondrial intermembrane space bridging (MIB) complex (By similarity).</text>
</comment>
<comment type="subcellular location">
    <subcellularLocation>
        <location evidence="2">Mitochondrion outer membrane</location>
    </subcellularLocation>
    <subcellularLocation>
        <location evidence="1">Mitochondrion</location>
    </subcellularLocation>
</comment>
<comment type="similarity">
    <text evidence="3">Belongs to the metaxin family.</text>
</comment>
<gene>
    <name type="primary">Mtx2</name>
    <name type="ORF">MNCb-0780</name>
</gene>
<name>MTX2_MOUSE</name>
<reference key="1">
    <citation type="journal article" date="1999" name="J. Cell. Biochem.">
        <title>Metaxin 1 interacts with metaxin 2, a novel related protein associated with the mammalian mitochondrial outer membrane.</title>
        <authorList>
            <person name="Armstrong L.C."/>
            <person name="Saenz A.J."/>
            <person name="Bornstein P."/>
        </authorList>
    </citation>
    <scope>NUCLEOTIDE SEQUENCE [MRNA]</scope>
    <scope>INTERACTION WITH MTX1</scope>
    <scope>SUBCELLULAR LOCATION</scope>
    <scope>FUNCTION</scope>
</reference>
<reference key="2">
    <citation type="submission" date="2000-04" db="EMBL/GenBank/DDBJ databases">
        <title>Isolation of full-length cDNA clones from mouse brain cDNA library made by oligo-capping method.</title>
        <authorList>
            <person name="Osada N."/>
            <person name="Kusuda J."/>
            <person name="Tanuma R."/>
            <person name="Ito A."/>
            <person name="Hirata M."/>
            <person name="Sugano S."/>
            <person name="Hashimoto K."/>
        </authorList>
    </citation>
    <scope>NUCLEOTIDE SEQUENCE [LARGE SCALE MRNA]</scope>
    <source>
        <strain>C57BL/6J</strain>
        <tissue>Brain</tissue>
    </source>
</reference>
<reference key="3">
    <citation type="journal article" date="2005" name="Science">
        <title>The transcriptional landscape of the mammalian genome.</title>
        <authorList>
            <person name="Carninci P."/>
            <person name="Kasukawa T."/>
            <person name="Katayama S."/>
            <person name="Gough J."/>
            <person name="Frith M.C."/>
            <person name="Maeda N."/>
            <person name="Oyama R."/>
            <person name="Ravasi T."/>
            <person name="Lenhard B."/>
            <person name="Wells C."/>
            <person name="Kodzius R."/>
            <person name="Shimokawa K."/>
            <person name="Bajic V.B."/>
            <person name="Brenner S.E."/>
            <person name="Batalov S."/>
            <person name="Forrest A.R."/>
            <person name="Zavolan M."/>
            <person name="Davis M.J."/>
            <person name="Wilming L.G."/>
            <person name="Aidinis V."/>
            <person name="Allen J.E."/>
            <person name="Ambesi-Impiombato A."/>
            <person name="Apweiler R."/>
            <person name="Aturaliya R.N."/>
            <person name="Bailey T.L."/>
            <person name="Bansal M."/>
            <person name="Baxter L."/>
            <person name="Beisel K.W."/>
            <person name="Bersano T."/>
            <person name="Bono H."/>
            <person name="Chalk A.M."/>
            <person name="Chiu K.P."/>
            <person name="Choudhary V."/>
            <person name="Christoffels A."/>
            <person name="Clutterbuck D.R."/>
            <person name="Crowe M.L."/>
            <person name="Dalla E."/>
            <person name="Dalrymple B.P."/>
            <person name="de Bono B."/>
            <person name="Della Gatta G."/>
            <person name="di Bernardo D."/>
            <person name="Down T."/>
            <person name="Engstrom P."/>
            <person name="Fagiolini M."/>
            <person name="Faulkner G."/>
            <person name="Fletcher C.F."/>
            <person name="Fukushima T."/>
            <person name="Furuno M."/>
            <person name="Futaki S."/>
            <person name="Gariboldi M."/>
            <person name="Georgii-Hemming P."/>
            <person name="Gingeras T.R."/>
            <person name="Gojobori T."/>
            <person name="Green R.E."/>
            <person name="Gustincich S."/>
            <person name="Harbers M."/>
            <person name="Hayashi Y."/>
            <person name="Hensch T.K."/>
            <person name="Hirokawa N."/>
            <person name="Hill D."/>
            <person name="Huminiecki L."/>
            <person name="Iacono M."/>
            <person name="Ikeo K."/>
            <person name="Iwama A."/>
            <person name="Ishikawa T."/>
            <person name="Jakt M."/>
            <person name="Kanapin A."/>
            <person name="Katoh M."/>
            <person name="Kawasawa Y."/>
            <person name="Kelso J."/>
            <person name="Kitamura H."/>
            <person name="Kitano H."/>
            <person name="Kollias G."/>
            <person name="Krishnan S.P."/>
            <person name="Kruger A."/>
            <person name="Kummerfeld S.K."/>
            <person name="Kurochkin I.V."/>
            <person name="Lareau L.F."/>
            <person name="Lazarevic D."/>
            <person name="Lipovich L."/>
            <person name="Liu J."/>
            <person name="Liuni S."/>
            <person name="McWilliam S."/>
            <person name="Madan Babu M."/>
            <person name="Madera M."/>
            <person name="Marchionni L."/>
            <person name="Matsuda H."/>
            <person name="Matsuzawa S."/>
            <person name="Miki H."/>
            <person name="Mignone F."/>
            <person name="Miyake S."/>
            <person name="Morris K."/>
            <person name="Mottagui-Tabar S."/>
            <person name="Mulder N."/>
            <person name="Nakano N."/>
            <person name="Nakauchi H."/>
            <person name="Ng P."/>
            <person name="Nilsson R."/>
            <person name="Nishiguchi S."/>
            <person name="Nishikawa S."/>
            <person name="Nori F."/>
            <person name="Ohara O."/>
            <person name="Okazaki Y."/>
            <person name="Orlando V."/>
            <person name="Pang K.C."/>
            <person name="Pavan W.J."/>
            <person name="Pavesi G."/>
            <person name="Pesole G."/>
            <person name="Petrovsky N."/>
            <person name="Piazza S."/>
            <person name="Reed J."/>
            <person name="Reid J.F."/>
            <person name="Ring B.Z."/>
            <person name="Ringwald M."/>
            <person name="Rost B."/>
            <person name="Ruan Y."/>
            <person name="Salzberg S.L."/>
            <person name="Sandelin A."/>
            <person name="Schneider C."/>
            <person name="Schoenbach C."/>
            <person name="Sekiguchi K."/>
            <person name="Semple C.A."/>
            <person name="Seno S."/>
            <person name="Sessa L."/>
            <person name="Sheng Y."/>
            <person name="Shibata Y."/>
            <person name="Shimada H."/>
            <person name="Shimada K."/>
            <person name="Silva D."/>
            <person name="Sinclair B."/>
            <person name="Sperling S."/>
            <person name="Stupka E."/>
            <person name="Sugiura K."/>
            <person name="Sultana R."/>
            <person name="Takenaka Y."/>
            <person name="Taki K."/>
            <person name="Tammoja K."/>
            <person name="Tan S.L."/>
            <person name="Tang S."/>
            <person name="Taylor M.S."/>
            <person name="Tegner J."/>
            <person name="Teichmann S.A."/>
            <person name="Ueda H.R."/>
            <person name="van Nimwegen E."/>
            <person name="Verardo R."/>
            <person name="Wei C.L."/>
            <person name="Yagi K."/>
            <person name="Yamanishi H."/>
            <person name="Zabarovsky E."/>
            <person name="Zhu S."/>
            <person name="Zimmer A."/>
            <person name="Hide W."/>
            <person name="Bult C."/>
            <person name="Grimmond S.M."/>
            <person name="Teasdale R.D."/>
            <person name="Liu E.T."/>
            <person name="Brusic V."/>
            <person name="Quackenbush J."/>
            <person name="Wahlestedt C."/>
            <person name="Mattick J.S."/>
            <person name="Hume D.A."/>
            <person name="Kai C."/>
            <person name="Sasaki D."/>
            <person name="Tomaru Y."/>
            <person name="Fukuda S."/>
            <person name="Kanamori-Katayama M."/>
            <person name="Suzuki M."/>
            <person name="Aoki J."/>
            <person name="Arakawa T."/>
            <person name="Iida J."/>
            <person name="Imamura K."/>
            <person name="Itoh M."/>
            <person name="Kato T."/>
            <person name="Kawaji H."/>
            <person name="Kawagashira N."/>
            <person name="Kawashima T."/>
            <person name="Kojima M."/>
            <person name="Kondo S."/>
            <person name="Konno H."/>
            <person name="Nakano K."/>
            <person name="Ninomiya N."/>
            <person name="Nishio T."/>
            <person name="Okada M."/>
            <person name="Plessy C."/>
            <person name="Shibata K."/>
            <person name="Shiraki T."/>
            <person name="Suzuki S."/>
            <person name="Tagami M."/>
            <person name="Waki K."/>
            <person name="Watahiki A."/>
            <person name="Okamura-Oho Y."/>
            <person name="Suzuki H."/>
            <person name="Kawai J."/>
            <person name="Hayashizaki Y."/>
        </authorList>
    </citation>
    <scope>NUCLEOTIDE SEQUENCE [LARGE SCALE MRNA]</scope>
    <source>
        <strain>BALB/cJ</strain>
        <strain>C57BL/6J</strain>
        <strain>NOD</strain>
        <tissue>Kidney</tissue>
        <tissue>Thymus</tissue>
    </source>
</reference>
<reference key="4">
    <citation type="journal article" date="2004" name="Genome Res.">
        <title>The status, quality, and expansion of the NIH full-length cDNA project: the Mammalian Gene Collection (MGC).</title>
        <authorList>
            <consortium name="The MGC Project Team"/>
        </authorList>
    </citation>
    <scope>NUCLEOTIDE SEQUENCE [LARGE SCALE MRNA]</scope>
    <source>
        <tissue>Mammary tumor</tissue>
    </source>
</reference>
<reference key="5">
    <citation type="journal article" date="2010" name="Cell">
        <title>A tissue-specific atlas of mouse protein phosphorylation and expression.</title>
        <authorList>
            <person name="Huttlin E.L."/>
            <person name="Jedrychowski M.P."/>
            <person name="Elias J.E."/>
            <person name="Goswami T."/>
            <person name="Rad R."/>
            <person name="Beausoleil S.A."/>
            <person name="Villen J."/>
            <person name="Haas W."/>
            <person name="Sowa M.E."/>
            <person name="Gygi S.P."/>
        </authorList>
    </citation>
    <scope>IDENTIFICATION BY MASS SPECTROMETRY [LARGE SCALE ANALYSIS]</scope>
    <source>
        <tissue>Brain</tissue>
        <tissue>Brown adipose tissue</tissue>
        <tissue>Heart</tissue>
        <tissue>Kidney</tissue>
        <tissue>Liver</tissue>
        <tissue>Lung</tissue>
        <tissue>Pancreas</tissue>
        <tissue>Spleen</tissue>
        <tissue>Testis</tissue>
    </source>
</reference>
<keyword id="KW-0007">Acetylation</keyword>
<keyword id="KW-0472">Membrane</keyword>
<keyword id="KW-0496">Mitochondrion</keyword>
<keyword id="KW-1000">Mitochondrion outer membrane</keyword>
<keyword id="KW-0653">Protein transport</keyword>
<keyword id="KW-1185">Reference proteome</keyword>
<keyword id="KW-0813">Transport</keyword>
<dbReference type="EMBL" id="AF053550">
    <property type="protein sequence ID" value="AAC25104.1"/>
    <property type="molecule type" value="mRNA"/>
</dbReference>
<dbReference type="EMBL" id="AB041562">
    <property type="protein sequence ID" value="BAA95046.1"/>
    <property type="molecule type" value="mRNA"/>
</dbReference>
<dbReference type="EMBL" id="AK087933">
    <property type="protein sequence ID" value="BAC40046.1"/>
    <property type="molecule type" value="mRNA"/>
</dbReference>
<dbReference type="EMBL" id="AK168000">
    <property type="protein sequence ID" value="BAE39989.1"/>
    <property type="molecule type" value="mRNA"/>
</dbReference>
<dbReference type="EMBL" id="AK169048">
    <property type="protein sequence ID" value="BAE40836.1"/>
    <property type="molecule type" value="mRNA"/>
</dbReference>
<dbReference type="EMBL" id="BC006641">
    <property type="protein sequence ID" value="AAH06641.1"/>
    <property type="molecule type" value="mRNA"/>
</dbReference>
<dbReference type="CCDS" id="CCDS16148.1"/>
<dbReference type="RefSeq" id="NP_058084.3">
    <property type="nucleotide sequence ID" value="NM_016804.4"/>
</dbReference>
<dbReference type="SMR" id="O88441"/>
<dbReference type="BioGRID" id="207298">
    <property type="interactions" value="27"/>
</dbReference>
<dbReference type="CORUM" id="O88441"/>
<dbReference type="FunCoup" id="O88441">
    <property type="interactions" value="3475"/>
</dbReference>
<dbReference type="IntAct" id="O88441">
    <property type="interactions" value="25"/>
</dbReference>
<dbReference type="STRING" id="10090.ENSMUSP00000028511"/>
<dbReference type="GlyGen" id="O88441">
    <property type="glycosylation" value="2 sites, 1 N-linked glycan (1 site), 1 O-linked glycan (1 site)"/>
</dbReference>
<dbReference type="iPTMnet" id="O88441"/>
<dbReference type="PhosphoSitePlus" id="O88441"/>
<dbReference type="SwissPalm" id="O88441"/>
<dbReference type="jPOST" id="O88441"/>
<dbReference type="PaxDb" id="10090-ENSMUSP00000028511"/>
<dbReference type="PeptideAtlas" id="O88441"/>
<dbReference type="ProteomicsDB" id="291457"/>
<dbReference type="Pumba" id="O88441"/>
<dbReference type="TopDownProteomics" id="O88441"/>
<dbReference type="Antibodypedia" id="33917">
    <property type="antibodies" value="177 antibodies from 26 providers"/>
</dbReference>
<dbReference type="DNASU" id="53375"/>
<dbReference type="Ensembl" id="ENSMUST00000028511.8">
    <property type="protein sequence ID" value="ENSMUSP00000028511.8"/>
    <property type="gene ID" value="ENSMUSG00000027099.10"/>
</dbReference>
<dbReference type="GeneID" id="53375"/>
<dbReference type="KEGG" id="mmu:53375"/>
<dbReference type="UCSC" id="uc008kej.2">
    <property type="organism name" value="mouse"/>
</dbReference>
<dbReference type="AGR" id="MGI:1859652"/>
<dbReference type="CTD" id="10651"/>
<dbReference type="MGI" id="MGI:1859652">
    <property type="gene designation" value="Mtx2"/>
</dbReference>
<dbReference type="VEuPathDB" id="HostDB:ENSMUSG00000027099"/>
<dbReference type="eggNOG" id="KOG3027">
    <property type="taxonomic scope" value="Eukaryota"/>
</dbReference>
<dbReference type="GeneTree" id="ENSGT00950000182919"/>
<dbReference type="HOGENOM" id="CLU_044137_6_0_1"/>
<dbReference type="InParanoid" id="O88441"/>
<dbReference type="OMA" id="YFQTRCL"/>
<dbReference type="OrthoDB" id="198787at2759"/>
<dbReference type="PhylomeDB" id="O88441"/>
<dbReference type="TreeFam" id="TF313422"/>
<dbReference type="BioGRID-ORCS" id="53375">
    <property type="hits" value="13 hits in 78 CRISPR screens"/>
</dbReference>
<dbReference type="ChiTaRS" id="Mtx2">
    <property type="organism name" value="mouse"/>
</dbReference>
<dbReference type="PRO" id="PR:O88441"/>
<dbReference type="Proteomes" id="UP000000589">
    <property type="component" value="Chromosome 2"/>
</dbReference>
<dbReference type="RNAct" id="O88441">
    <property type="molecule type" value="protein"/>
</dbReference>
<dbReference type="Bgee" id="ENSMUSG00000027099">
    <property type="expression patterns" value="Expressed in embryonic post-anal tail and 262 other cell types or tissues"/>
</dbReference>
<dbReference type="GO" id="GO:0005739">
    <property type="term" value="C:mitochondrion"/>
    <property type="evidence" value="ECO:0007005"/>
    <property type="project" value="MGI"/>
</dbReference>
<dbReference type="GO" id="GO:0005730">
    <property type="term" value="C:nucleolus"/>
    <property type="evidence" value="ECO:0007669"/>
    <property type="project" value="Ensembl"/>
</dbReference>
<dbReference type="GO" id="GO:0001401">
    <property type="term" value="C:SAM complex"/>
    <property type="evidence" value="ECO:0007669"/>
    <property type="project" value="Ensembl"/>
</dbReference>
<dbReference type="GO" id="GO:0006839">
    <property type="term" value="P:mitochondrial transport"/>
    <property type="evidence" value="ECO:0000250"/>
    <property type="project" value="UniProtKB"/>
</dbReference>
<dbReference type="GO" id="GO:0015031">
    <property type="term" value="P:protein transport"/>
    <property type="evidence" value="ECO:0007669"/>
    <property type="project" value="UniProtKB-KW"/>
</dbReference>
<dbReference type="CDD" id="cd03211">
    <property type="entry name" value="GST_C_Metaxin2"/>
    <property type="match status" value="1"/>
</dbReference>
<dbReference type="CDD" id="cd03079">
    <property type="entry name" value="GST_N_Metaxin2"/>
    <property type="match status" value="1"/>
</dbReference>
<dbReference type="FunFam" id="1.20.1050.10:FF:000033">
    <property type="entry name" value="metaxin-2 isoform X1"/>
    <property type="match status" value="1"/>
</dbReference>
<dbReference type="Gene3D" id="1.20.1050.10">
    <property type="match status" value="1"/>
</dbReference>
<dbReference type="InterPro" id="IPR036282">
    <property type="entry name" value="Glutathione-S-Trfase_C_sf"/>
</dbReference>
<dbReference type="InterPro" id="IPR040079">
    <property type="entry name" value="Glutathione_S-Trfase"/>
</dbReference>
<dbReference type="InterPro" id="IPR033468">
    <property type="entry name" value="Metaxin_GST"/>
</dbReference>
<dbReference type="InterPro" id="IPR050931">
    <property type="entry name" value="Mito_Protein_Transport_Metaxin"/>
</dbReference>
<dbReference type="InterPro" id="IPR019564">
    <property type="entry name" value="Sam37/metaxin_N"/>
</dbReference>
<dbReference type="PANTHER" id="PTHR12289">
    <property type="entry name" value="METAXIN RELATED"/>
    <property type="match status" value="1"/>
</dbReference>
<dbReference type="PANTHER" id="PTHR12289:SF38">
    <property type="entry name" value="METAXIN-2"/>
    <property type="match status" value="1"/>
</dbReference>
<dbReference type="Pfam" id="PF17171">
    <property type="entry name" value="GST_C_6"/>
    <property type="match status" value="1"/>
</dbReference>
<dbReference type="Pfam" id="PF10568">
    <property type="entry name" value="Tom37"/>
    <property type="match status" value="1"/>
</dbReference>
<dbReference type="SFLD" id="SFLDS00019">
    <property type="entry name" value="Glutathione_Transferase_(cytos"/>
    <property type="match status" value="1"/>
</dbReference>
<dbReference type="SFLD" id="SFLDG01180">
    <property type="entry name" value="SUF1"/>
    <property type="match status" value="1"/>
</dbReference>
<dbReference type="SUPFAM" id="SSF47616">
    <property type="entry name" value="GST C-terminal domain-like"/>
    <property type="match status" value="1"/>
</dbReference>
<evidence type="ECO:0000250" key="1">
    <source>
        <dbReference type="UniProtKB" id="O75431"/>
    </source>
</evidence>
<evidence type="ECO:0000269" key="2">
    <source>
    </source>
</evidence>
<evidence type="ECO:0000305" key="3"/>
<accession>O88441</accession>
<accession>Q3TFR2</accession>